<protein>
    <recommendedName>
        <fullName>Uncharacterized 9.4 kDa protein</fullName>
    </recommendedName>
</protein>
<proteinExistence type="predicted"/>
<sequence length="83" mass="9402">MLPLMAAISSSSLGIGTSSYSPRYTILSSLIVYTLMRKTRAPFLLSSSFFQSFSLYYKSSLLNSMLMLPLLLHIPYYVKHNKL</sequence>
<organismHost>
    <name type="scientific">Thermoproteus tenax</name>
    <dbReference type="NCBI Taxonomy" id="2271"/>
</organismHost>
<accession>P19287</accession>
<reference key="1">
    <citation type="submission" date="1989-03" db="EMBL/GenBank/DDBJ databases">
        <authorList>
            <person name="Neumann H."/>
        </authorList>
    </citation>
    <scope>NUCLEOTIDE SEQUENCE [GENOMIC DNA]</scope>
</reference>
<name>YORC_TTV1K</name>
<dbReference type="EMBL" id="X14855">
    <property type="protein sequence ID" value="CAA32981.1"/>
    <property type="molecule type" value="Genomic_DNA"/>
</dbReference>
<dbReference type="Proteomes" id="UP000009250">
    <property type="component" value="Genome"/>
</dbReference>
<organism>
    <name type="scientific">Thermoproteus tenax virus 1 (strain KRA1)</name>
    <name type="common">TTV1</name>
    <dbReference type="NCBI Taxonomy" id="10480"/>
    <lineage>
        <taxon>Viruses</taxon>
        <taxon>Adnaviria</taxon>
        <taxon>Zilligvirae</taxon>
        <taxon>Taleaviricota</taxon>
        <taxon>Tokiviricetes</taxon>
        <taxon>Primavirales</taxon>
        <taxon>Tristromaviridae</taxon>
        <taxon>Betatristromavirus</taxon>
        <taxon>Betatristromavirus TTV1</taxon>
    </lineage>
</organism>
<keyword id="KW-1185">Reference proteome</keyword>
<feature type="chain" id="PRO_0000222969" description="Uncharacterized 9.4 kDa protein">
    <location>
        <begin position="1"/>
        <end position="83"/>
    </location>
</feature>